<name>TRMD_ECOL5</name>
<proteinExistence type="inferred from homology"/>
<comment type="function">
    <text evidence="1">Specifically methylates guanosine-37 in various tRNAs.</text>
</comment>
<comment type="catalytic activity">
    <reaction evidence="1">
        <text>guanosine(37) in tRNA + S-adenosyl-L-methionine = N(1)-methylguanosine(37) in tRNA + S-adenosyl-L-homocysteine + H(+)</text>
        <dbReference type="Rhea" id="RHEA:36899"/>
        <dbReference type="Rhea" id="RHEA-COMP:10145"/>
        <dbReference type="Rhea" id="RHEA-COMP:10147"/>
        <dbReference type="ChEBI" id="CHEBI:15378"/>
        <dbReference type="ChEBI" id="CHEBI:57856"/>
        <dbReference type="ChEBI" id="CHEBI:59789"/>
        <dbReference type="ChEBI" id="CHEBI:73542"/>
        <dbReference type="ChEBI" id="CHEBI:74269"/>
        <dbReference type="EC" id="2.1.1.228"/>
    </reaction>
</comment>
<comment type="subunit">
    <text evidence="1">Homodimer.</text>
</comment>
<comment type="subcellular location">
    <subcellularLocation>
        <location evidence="1">Cytoplasm</location>
    </subcellularLocation>
</comment>
<comment type="similarity">
    <text evidence="1">Belongs to the RNA methyltransferase TrmD family.</text>
</comment>
<evidence type="ECO:0000255" key="1">
    <source>
        <dbReference type="HAMAP-Rule" id="MF_00605"/>
    </source>
</evidence>
<reference key="1">
    <citation type="journal article" date="2006" name="Mol. Microbiol.">
        <title>Role of pathogenicity island-associated integrases in the genome plasticity of uropathogenic Escherichia coli strain 536.</title>
        <authorList>
            <person name="Hochhut B."/>
            <person name="Wilde C."/>
            <person name="Balling G."/>
            <person name="Middendorf B."/>
            <person name="Dobrindt U."/>
            <person name="Brzuszkiewicz E."/>
            <person name="Gottschalk G."/>
            <person name="Carniel E."/>
            <person name="Hacker J."/>
        </authorList>
    </citation>
    <scope>NUCLEOTIDE SEQUENCE [LARGE SCALE GENOMIC DNA]</scope>
    <source>
        <strain>536 / UPEC</strain>
    </source>
</reference>
<accession>Q0TEN2</accession>
<sequence>MWIGIISLFPEMFRAITDYGVTGRAVKNGLLSIQSWSPRDFTHDRHRTVDDRPYGGGPGMLMMVQPLRDAIHAAKAAAGEGAKVIYLSPQGRKLDQAGVSELATNQKLILVCGRYEGIDERVIQTEIDEEWSIGDYVLSGGELPAMTLIDSVSRFIPGVLGHEASATEDSFAEGLLDCPHYTRPEVLEGMEVPPVLLSGNHAEIRRWRLKQSLGRTWLRRPELLENLALTEEQARLLAEFKTEHAQQQHKHDGMA</sequence>
<gene>
    <name evidence="1" type="primary">trmD</name>
    <name type="ordered locus">ECP_2608</name>
</gene>
<organism>
    <name type="scientific">Escherichia coli O6:K15:H31 (strain 536 / UPEC)</name>
    <dbReference type="NCBI Taxonomy" id="362663"/>
    <lineage>
        <taxon>Bacteria</taxon>
        <taxon>Pseudomonadati</taxon>
        <taxon>Pseudomonadota</taxon>
        <taxon>Gammaproteobacteria</taxon>
        <taxon>Enterobacterales</taxon>
        <taxon>Enterobacteriaceae</taxon>
        <taxon>Escherichia</taxon>
    </lineage>
</organism>
<keyword id="KW-0963">Cytoplasm</keyword>
<keyword id="KW-0489">Methyltransferase</keyword>
<keyword id="KW-0949">S-adenosyl-L-methionine</keyword>
<keyword id="KW-0808">Transferase</keyword>
<keyword id="KW-0819">tRNA processing</keyword>
<feature type="chain" id="PRO_0000257419" description="tRNA (guanine-N(1)-)-methyltransferase">
    <location>
        <begin position="1"/>
        <end position="255"/>
    </location>
</feature>
<feature type="binding site" evidence="1">
    <location>
        <position position="113"/>
    </location>
    <ligand>
        <name>S-adenosyl-L-methionine</name>
        <dbReference type="ChEBI" id="CHEBI:59789"/>
    </ligand>
</feature>
<feature type="binding site" evidence="1">
    <location>
        <begin position="133"/>
        <end position="138"/>
    </location>
    <ligand>
        <name>S-adenosyl-L-methionine</name>
        <dbReference type="ChEBI" id="CHEBI:59789"/>
    </ligand>
</feature>
<protein>
    <recommendedName>
        <fullName evidence="1">tRNA (guanine-N(1)-)-methyltransferase</fullName>
        <ecNumber evidence="1">2.1.1.228</ecNumber>
    </recommendedName>
    <alternativeName>
        <fullName evidence="1">M1G-methyltransferase</fullName>
    </alternativeName>
    <alternativeName>
        <fullName evidence="1">tRNA [GM37] methyltransferase</fullName>
    </alternativeName>
</protein>
<dbReference type="EC" id="2.1.1.228" evidence="1"/>
<dbReference type="EMBL" id="CP000247">
    <property type="protein sequence ID" value="ABG70597.1"/>
    <property type="molecule type" value="Genomic_DNA"/>
</dbReference>
<dbReference type="RefSeq" id="WP_000264777.1">
    <property type="nucleotide sequence ID" value="NC_008253.1"/>
</dbReference>
<dbReference type="SMR" id="Q0TEN2"/>
<dbReference type="GeneID" id="93774457"/>
<dbReference type="KEGG" id="ecp:ECP_2608"/>
<dbReference type="HOGENOM" id="CLU_047363_0_1_6"/>
<dbReference type="Proteomes" id="UP000009182">
    <property type="component" value="Chromosome"/>
</dbReference>
<dbReference type="GO" id="GO:0005829">
    <property type="term" value="C:cytosol"/>
    <property type="evidence" value="ECO:0007669"/>
    <property type="project" value="TreeGrafter"/>
</dbReference>
<dbReference type="GO" id="GO:0052906">
    <property type="term" value="F:tRNA (guanine(37)-N1)-methyltransferase activity"/>
    <property type="evidence" value="ECO:0007669"/>
    <property type="project" value="UniProtKB-UniRule"/>
</dbReference>
<dbReference type="GO" id="GO:0002939">
    <property type="term" value="P:tRNA N1-guanine methylation"/>
    <property type="evidence" value="ECO:0007669"/>
    <property type="project" value="TreeGrafter"/>
</dbReference>
<dbReference type="CDD" id="cd18080">
    <property type="entry name" value="TrmD-like"/>
    <property type="match status" value="1"/>
</dbReference>
<dbReference type="FunFam" id="1.10.1270.20:FF:000001">
    <property type="entry name" value="tRNA (guanine-N(1)-)-methyltransferase"/>
    <property type="match status" value="1"/>
</dbReference>
<dbReference type="FunFam" id="3.40.1280.10:FF:000001">
    <property type="entry name" value="tRNA (guanine-N(1)-)-methyltransferase"/>
    <property type="match status" value="1"/>
</dbReference>
<dbReference type="Gene3D" id="3.40.1280.10">
    <property type="match status" value="1"/>
</dbReference>
<dbReference type="Gene3D" id="1.10.1270.20">
    <property type="entry name" value="tRNA(m1g37)methyltransferase, domain 2"/>
    <property type="match status" value="1"/>
</dbReference>
<dbReference type="HAMAP" id="MF_00605">
    <property type="entry name" value="TrmD"/>
    <property type="match status" value="1"/>
</dbReference>
<dbReference type="InterPro" id="IPR029028">
    <property type="entry name" value="Alpha/beta_knot_MTases"/>
</dbReference>
<dbReference type="InterPro" id="IPR023148">
    <property type="entry name" value="tRNA_m1G_MeTrfase_C_sf"/>
</dbReference>
<dbReference type="InterPro" id="IPR002649">
    <property type="entry name" value="tRNA_m1G_MeTrfase_TrmD"/>
</dbReference>
<dbReference type="InterPro" id="IPR029026">
    <property type="entry name" value="tRNA_m1G_MTases_N"/>
</dbReference>
<dbReference type="InterPro" id="IPR016009">
    <property type="entry name" value="tRNA_MeTrfase_TRMD/TRM10"/>
</dbReference>
<dbReference type="NCBIfam" id="NF000648">
    <property type="entry name" value="PRK00026.1"/>
    <property type="match status" value="1"/>
</dbReference>
<dbReference type="NCBIfam" id="TIGR00088">
    <property type="entry name" value="trmD"/>
    <property type="match status" value="1"/>
</dbReference>
<dbReference type="PANTHER" id="PTHR46417">
    <property type="entry name" value="TRNA (GUANINE-N(1)-)-METHYLTRANSFERASE"/>
    <property type="match status" value="1"/>
</dbReference>
<dbReference type="PANTHER" id="PTHR46417:SF1">
    <property type="entry name" value="TRNA (GUANINE-N(1)-)-METHYLTRANSFERASE"/>
    <property type="match status" value="1"/>
</dbReference>
<dbReference type="Pfam" id="PF01746">
    <property type="entry name" value="tRNA_m1G_MT"/>
    <property type="match status" value="1"/>
</dbReference>
<dbReference type="PIRSF" id="PIRSF000386">
    <property type="entry name" value="tRNA_mtase"/>
    <property type="match status" value="1"/>
</dbReference>
<dbReference type="SUPFAM" id="SSF75217">
    <property type="entry name" value="alpha/beta knot"/>
    <property type="match status" value="1"/>
</dbReference>